<accession>P20063</accession>
<evidence type="ECO:0000250" key="1"/>
<evidence type="ECO:0000250" key="2">
    <source>
        <dbReference type="UniProtKB" id="P01130"/>
    </source>
</evidence>
<evidence type="ECO:0000250" key="3">
    <source>
        <dbReference type="UniProtKB" id="P01131"/>
    </source>
</evidence>
<evidence type="ECO:0000250" key="4">
    <source>
        <dbReference type="UniProtKB" id="P35951"/>
    </source>
</evidence>
<evidence type="ECO:0000250" key="5">
    <source>
        <dbReference type="UniProtKB" id="P35952"/>
    </source>
</evidence>
<evidence type="ECO:0000255" key="6"/>
<evidence type="ECO:0000255" key="7">
    <source>
        <dbReference type="PROSITE-ProRule" id="PRU00076"/>
    </source>
</evidence>
<evidence type="ECO:0000255" key="8">
    <source>
        <dbReference type="PROSITE-ProRule" id="PRU00124"/>
    </source>
</evidence>
<evidence type="ECO:0000256" key="9">
    <source>
        <dbReference type="SAM" id="MobiDB-lite"/>
    </source>
</evidence>
<evidence type="ECO:0000269" key="10">
    <source>
    </source>
</evidence>
<evidence type="ECO:0000305" key="11"/>
<comment type="function">
    <text evidence="2">Binds low density lipoprotein /LDL, the major cholesterol-carrying lipoprotein of plasma, and transports it into cells by endocytosis. In order to be internalized, the receptor-ligand complexes must first cluster into clathrin-coated pits. Forms a ternary complex with PGRMC1 and TMEM97 receptors which increases LDLR-mediated LDL internalization.</text>
</comment>
<comment type="subunit">
    <text evidence="2 4">Interacts (via NPXY motif) with DAB2 (via PID domain); the interaction is impaired by tyrosine phosphorylation of the NPXY motif (By similarity). Interacts (via NPXY motif) with LDLRAP1 (via PID domain). Interacts with ARRB1. Interacts with SNX17. Interacts with the full-length immature form of PCSK9 (via C-terminus) (By similarity). Interacts with PGRMC1 and TMEM97; the interaction increases LDL internalization (By similarity).</text>
</comment>
<comment type="subcellular location">
    <subcellularLocation>
        <location evidence="10">Cell membrane</location>
        <topology evidence="3">Single-pass type I membrane protein</topology>
    </subcellularLocation>
    <subcellularLocation>
        <location evidence="2">Membrane</location>
        <location evidence="2">Clathrin-coated pit</location>
    </subcellularLocation>
    <subcellularLocation>
        <location evidence="2">Golgi apparatus</location>
    </subcellularLocation>
    <subcellularLocation>
        <location evidence="2">Early endosome</location>
    </subcellularLocation>
    <subcellularLocation>
        <location evidence="2">Late endosome</location>
    </subcellularLocation>
    <subcellularLocation>
        <location evidence="2">Lysosome</location>
    </subcellularLocation>
    <text evidence="2">Rapidly endocytosed upon ligand binding.</text>
</comment>
<comment type="domain">
    <text evidence="2">The NPXY motif mediates the interaction with the clathrin adapter DAB2 and with LDLRAP1 which are involved in receptor internalization. A few residues outside the motif also play a role in the interaction.</text>
</comment>
<comment type="PTM">
    <text evidence="2">N- and O-glycosylated.</text>
</comment>
<comment type="PTM">
    <text evidence="2">Ubiquitinated by MYLIP leading to degradation.</text>
</comment>
<comment type="similarity">
    <text evidence="11">Belongs to the LDLR family.</text>
</comment>
<protein>
    <recommendedName>
        <fullName>Low-density lipoprotein receptor</fullName>
        <shortName>LDL receptor</shortName>
    </recommendedName>
</protein>
<feature type="chain" id="PRO_0000191077" description="Low-density lipoprotein receptor">
    <location>
        <begin position="1" status="less than"/>
        <end position="837"/>
    </location>
</feature>
<feature type="topological domain" description="Extracellular" evidence="3">
    <location>
        <begin position="1" status="less than"/>
        <end position="765"/>
    </location>
</feature>
<feature type="transmembrane region" description="Helical" evidence="6">
    <location>
        <begin position="766"/>
        <end position="787"/>
    </location>
</feature>
<feature type="topological domain" description="Cytoplasmic" evidence="2">
    <location>
        <begin position="788"/>
        <end position="837"/>
    </location>
</feature>
<feature type="domain" description="LDL-receptor class A 1" evidence="8">
    <location>
        <begin position="12"/>
        <end position="52"/>
    </location>
</feature>
<feature type="domain" description="LDL-receptor class A 2" evidence="8">
    <location>
        <begin position="53"/>
        <end position="93"/>
    </location>
</feature>
<feature type="domain" description="LDL-receptor class A 3" evidence="8">
    <location>
        <begin position="94"/>
        <end position="132"/>
    </location>
</feature>
<feature type="domain" description="LDL-receptor class A 4" evidence="8">
    <location>
        <begin position="133"/>
        <end position="173"/>
    </location>
</feature>
<feature type="domain" description="LDL-receptor class A 5" evidence="8">
    <location>
        <begin position="182"/>
        <end position="220"/>
    </location>
</feature>
<feature type="domain" description="LDL-receptor class A 6" evidence="8">
    <location>
        <begin position="221"/>
        <end position="259"/>
    </location>
</feature>
<feature type="domain" description="LDL-receptor class A 7" evidence="8">
    <location>
        <begin position="261"/>
        <end position="300"/>
    </location>
</feature>
<feature type="domain" description="EGF-like 1" evidence="7">
    <location>
        <begin position="301"/>
        <end position="340"/>
    </location>
</feature>
<feature type="domain" description="EGF-like 2; calcium-binding" evidence="7">
    <location>
        <begin position="341"/>
        <end position="380"/>
    </location>
</feature>
<feature type="repeat" description="LDL-receptor class B 1">
    <location>
        <begin position="384"/>
        <end position="425"/>
    </location>
</feature>
<feature type="repeat" description="LDL-receptor class B 2">
    <location>
        <begin position="426"/>
        <end position="472"/>
    </location>
</feature>
<feature type="repeat" description="LDL-receptor class B 3">
    <location>
        <begin position="473"/>
        <end position="515"/>
    </location>
</feature>
<feature type="repeat" description="LDL-receptor class B 4">
    <location>
        <begin position="516"/>
        <end position="559"/>
    </location>
</feature>
<feature type="repeat" description="LDL-receptor class B 5">
    <location>
        <begin position="560"/>
        <end position="602"/>
    </location>
</feature>
<feature type="repeat" description="LDL-receptor class B 6">
    <location>
        <begin position="603"/>
        <end position="645"/>
    </location>
</feature>
<feature type="domain" description="EGF-like 3" evidence="7">
    <location>
        <begin position="650"/>
        <end position="699"/>
    </location>
</feature>
<feature type="region of interest" description="Disordered" evidence="9">
    <location>
        <begin position="709"/>
        <end position="731"/>
    </location>
</feature>
<feature type="region of interest" description="Required for MYLIP-triggered down-regulation of LDLR" evidence="2">
    <location>
        <begin position="788"/>
        <end position="837"/>
    </location>
</feature>
<feature type="short sequence motif" description="NPXY motif" evidence="2">
    <location>
        <begin position="800"/>
        <end position="805"/>
    </location>
</feature>
<feature type="modified residue" description="Phosphothreonine" evidence="5">
    <location>
        <position position="720"/>
    </location>
</feature>
<feature type="modified residue" description="Phosphoserine" evidence="5">
    <location>
        <position position="722"/>
    </location>
</feature>
<feature type="glycosylation site" description="N-linked (GlcNAc...) asparagine" evidence="6">
    <location>
        <position position="143"/>
    </location>
</feature>
<feature type="glycosylation site" description="N-linked (GlcNAc...) asparagine" evidence="6">
    <location>
        <position position="259"/>
    </location>
</feature>
<feature type="glycosylation site" description="N-linked (GlcNAc...) asparagine" evidence="6">
    <location>
        <position position="644"/>
    </location>
</feature>
<feature type="disulfide bond" evidence="1">
    <location>
        <begin position="14"/>
        <end position="26"/>
    </location>
</feature>
<feature type="disulfide bond" evidence="1">
    <location>
        <begin position="21"/>
        <end position="39"/>
    </location>
</feature>
<feature type="disulfide bond" evidence="1">
    <location>
        <begin position="33"/>
        <end position="50"/>
    </location>
</feature>
<feature type="disulfide bond" evidence="1">
    <location>
        <begin position="55"/>
        <end position="69"/>
    </location>
</feature>
<feature type="disulfide bond" evidence="1">
    <location>
        <begin position="62"/>
        <end position="82"/>
    </location>
</feature>
<feature type="disulfide bond" evidence="1">
    <location>
        <begin position="76"/>
        <end position="91"/>
    </location>
</feature>
<feature type="disulfide bond" evidence="1">
    <location>
        <begin position="96"/>
        <end position="108"/>
    </location>
</feature>
<feature type="disulfide bond" evidence="1">
    <location>
        <begin position="103"/>
        <end position="121"/>
    </location>
</feature>
<feature type="disulfide bond" evidence="1">
    <location>
        <begin position="115"/>
        <end position="130"/>
    </location>
</feature>
<feature type="disulfide bond" evidence="1">
    <location>
        <begin position="135"/>
        <end position="147"/>
    </location>
</feature>
<feature type="disulfide bond" evidence="1">
    <location>
        <begin position="142"/>
        <end position="160"/>
    </location>
</feature>
<feature type="disulfide bond" evidence="1">
    <location>
        <begin position="154"/>
        <end position="171"/>
    </location>
</feature>
<feature type="disulfide bond" evidence="1">
    <location>
        <begin position="184"/>
        <end position="196"/>
    </location>
</feature>
<feature type="disulfide bond" evidence="1">
    <location>
        <begin position="191"/>
        <end position="209"/>
    </location>
</feature>
<feature type="disulfide bond" evidence="1">
    <location>
        <begin position="203"/>
        <end position="218"/>
    </location>
</feature>
<feature type="disulfide bond" evidence="1">
    <location>
        <begin position="223"/>
        <end position="235"/>
    </location>
</feature>
<feature type="disulfide bond" evidence="1">
    <location>
        <begin position="230"/>
        <end position="248"/>
    </location>
</feature>
<feature type="disulfide bond" evidence="1">
    <location>
        <begin position="242"/>
        <end position="257"/>
    </location>
</feature>
<feature type="disulfide bond" evidence="1">
    <location>
        <begin position="263"/>
        <end position="276"/>
    </location>
</feature>
<feature type="disulfide bond" evidence="1">
    <location>
        <begin position="271"/>
        <end position="289"/>
    </location>
</feature>
<feature type="disulfide bond" evidence="1">
    <location>
        <begin position="283"/>
        <end position="300"/>
    </location>
</feature>
<feature type="disulfide bond" evidence="1">
    <location>
        <begin position="305"/>
        <end position="316"/>
    </location>
</feature>
<feature type="disulfide bond" evidence="1">
    <location>
        <begin position="312"/>
        <end position="325"/>
    </location>
</feature>
<feature type="disulfide bond" evidence="1">
    <location>
        <begin position="327"/>
        <end position="339"/>
    </location>
</feature>
<feature type="disulfide bond" evidence="1">
    <location>
        <begin position="345"/>
        <end position="355"/>
    </location>
</feature>
<feature type="disulfide bond" evidence="1">
    <location>
        <begin position="351"/>
        <end position="364"/>
    </location>
</feature>
<feature type="disulfide bond" evidence="1">
    <location>
        <begin position="366"/>
        <end position="379"/>
    </location>
</feature>
<feature type="disulfide bond" evidence="1">
    <location>
        <begin position="654"/>
        <end position="668"/>
    </location>
</feature>
<feature type="disulfide bond" evidence="1">
    <location>
        <begin position="664"/>
        <end position="683"/>
    </location>
</feature>
<feature type="disulfide bond" evidence="1">
    <location>
        <begin position="685"/>
        <end position="698"/>
    </location>
</feature>
<feature type="non-terminal residue">
    <location>
        <position position="1"/>
    </location>
</feature>
<dbReference type="EMBL" id="M11501">
    <property type="protein sequence ID" value="AAA31383.1"/>
    <property type="molecule type" value="mRNA"/>
</dbReference>
<dbReference type="PIR" id="A29512">
    <property type="entry name" value="A29512"/>
</dbReference>
<dbReference type="SMR" id="P20063"/>
<dbReference type="FunCoup" id="P20063">
    <property type="interactions" value="224"/>
</dbReference>
<dbReference type="STRING" id="9986.ENSOCUP00000000568"/>
<dbReference type="GlyCosmos" id="P20063">
    <property type="glycosylation" value="3 sites, No reported glycans"/>
</dbReference>
<dbReference type="eggNOG" id="KOG1215">
    <property type="taxonomic scope" value="Eukaryota"/>
</dbReference>
<dbReference type="InParanoid" id="P20063"/>
<dbReference type="Proteomes" id="UP000001811">
    <property type="component" value="Unplaced"/>
</dbReference>
<dbReference type="GO" id="GO:0016324">
    <property type="term" value="C:apical plasma membrane"/>
    <property type="evidence" value="ECO:0007669"/>
    <property type="project" value="TreeGrafter"/>
</dbReference>
<dbReference type="GO" id="GO:0009986">
    <property type="term" value="C:cell surface"/>
    <property type="evidence" value="ECO:0000250"/>
    <property type="project" value="UniProtKB"/>
</dbReference>
<dbReference type="GO" id="GO:0005905">
    <property type="term" value="C:clathrin-coated pit"/>
    <property type="evidence" value="ECO:0007669"/>
    <property type="project" value="UniProtKB-SubCell"/>
</dbReference>
<dbReference type="GO" id="GO:0005769">
    <property type="term" value="C:early endosome"/>
    <property type="evidence" value="ECO:0000250"/>
    <property type="project" value="UniProtKB"/>
</dbReference>
<dbReference type="GO" id="GO:0005794">
    <property type="term" value="C:Golgi apparatus"/>
    <property type="evidence" value="ECO:0000250"/>
    <property type="project" value="UniProtKB"/>
</dbReference>
<dbReference type="GO" id="GO:0005770">
    <property type="term" value="C:late endosome"/>
    <property type="evidence" value="ECO:0000250"/>
    <property type="project" value="UniProtKB"/>
</dbReference>
<dbReference type="GO" id="GO:0034362">
    <property type="term" value="C:low-density lipoprotein particle"/>
    <property type="evidence" value="ECO:0007669"/>
    <property type="project" value="UniProtKB-KW"/>
</dbReference>
<dbReference type="GO" id="GO:0005764">
    <property type="term" value="C:lysosome"/>
    <property type="evidence" value="ECO:0000250"/>
    <property type="project" value="UniProtKB"/>
</dbReference>
<dbReference type="GO" id="GO:0043235">
    <property type="term" value="C:receptor complex"/>
    <property type="evidence" value="ECO:0007669"/>
    <property type="project" value="TreeGrafter"/>
</dbReference>
<dbReference type="GO" id="GO:0005509">
    <property type="term" value="F:calcium ion binding"/>
    <property type="evidence" value="ECO:0007669"/>
    <property type="project" value="InterPro"/>
</dbReference>
<dbReference type="GO" id="GO:0042562">
    <property type="term" value="F:hormone binding"/>
    <property type="evidence" value="ECO:0007669"/>
    <property type="project" value="TreeGrafter"/>
</dbReference>
<dbReference type="GO" id="GO:0008203">
    <property type="term" value="P:cholesterol metabolic process"/>
    <property type="evidence" value="ECO:0007669"/>
    <property type="project" value="UniProtKB-KW"/>
</dbReference>
<dbReference type="GO" id="GO:0006869">
    <property type="term" value="P:lipid transport"/>
    <property type="evidence" value="ECO:0007669"/>
    <property type="project" value="UniProtKB-KW"/>
</dbReference>
<dbReference type="GO" id="GO:0006898">
    <property type="term" value="P:receptor-mediated endocytosis"/>
    <property type="evidence" value="ECO:0007669"/>
    <property type="project" value="TreeGrafter"/>
</dbReference>
<dbReference type="CDD" id="cd00054">
    <property type="entry name" value="EGF_CA"/>
    <property type="match status" value="1"/>
</dbReference>
<dbReference type="CDD" id="cd00112">
    <property type="entry name" value="LDLa"/>
    <property type="match status" value="7"/>
</dbReference>
<dbReference type="FunFam" id="4.10.400.10:FF:000072">
    <property type="entry name" value="Low density lipoprotein receptor"/>
    <property type="match status" value="1"/>
</dbReference>
<dbReference type="FunFam" id="4.10.400.10:FF:000084">
    <property type="entry name" value="Low density lipoprotein receptor"/>
    <property type="match status" value="1"/>
</dbReference>
<dbReference type="FunFam" id="4.10.400.10:FF:000124">
    <property type="entry name" value="Low density lipoprotein receptor"/>
    <property type="match status" value="1"/>
</dbReference>
<dbReference type="FunFam" id="4.10.400.10:FF:000116">
    <property type="entry name" value="Low-density lipoprotein receptor"/>
    <property type="match status" value="1"/>
</dbReference>
<dbReference type="FunFam" id="2.10.25.10:FF:000052">
    <property type="entry name" value="low-density lipoprotein receptor isoform X1"/>
    <property type="match status" value="1"/>
</dbReference>
<dbReference type="FunFam" id="2.120.10.30:FF:000002">
    <property type="entry name" value="low-density lipoprotein receptor isoform X1"/>
    <property type="match status" value="1"/>
</dbReference>
<dbReference type="FunFam" id="4.10.400.10:FF:000113">
    <property type="entry name" value="Low-density lipoprotein receptor-related protein 8"/>
    <property type="match status" value="1"/>
</dbReference>
<dbReference type="FunFam" id="4.10.400.10:FF:000006">
    <property type="entry name" value="Putative low-density lipoprotein receptor"/>
    <property type="match status" value="1"/>
</dbReference>
<dbReference type="FunFam" id="2.10.25.10:FF:000093">
    <property type="entry name" value="Very low-density lipoprotein receptor"/>
    <property type="match status" value="1"/>
</dbReference>
<dbReference type="FunFam" id="2.10.25.10:FF:000240">
    <property type="entry name" value="Vitamin K-dependent protein S"/>
    <property type="match status" value="1"/>
</dbReference>
<dbReference type="Gene3D" id="4.10.1220.10">
    <property type="entry name" value="EGF-type module"/>
    <property type="match status" value="1"/>
</dbReference>
<dbReference type="Gene3D" id="2.10.25.10">
    <property type="entry name" value="Laminin"/>
    <property type="match status" value="3"/>
</dbReference>
<dbReference type="Gene3D" id="4.10.400.10">
    <property type="entry name" value="Low-density Lipoprotein Receptor"/>
    <property type="match status" value="6"/>
</dbReference>
<dbReference type="Gene3D" id="2.120.10.30">
    <property type="entry name" value="TolB, C-terminal domain"/>
    <property type="match status" value="1"/>
</dbReference>
<dbReference type="InterPro" id="IPR011042">
    <property type="entry name" value="6-blade_b-propeller_TolB-like"/>
</dbReference>
<dbReference type="InterPro" id="IPR001881">
    <property type="entry name" value="EGF-like_Ca-bd_dom"/>
</dbReference>
<dbReference type="InterPro" id="IPR000742">
    <property type="entry name" value="EGF-like_dom"/>
</dbReference>
<dbReference type="InterPro" id="IPR000152">
    <property type="entry name" value="EGF-type_Asp/Asn_hydroxyl_site"/>
</dbReference>
<dbReference type="InterPro" id="IPR018097">
    <property type="entry name" value="EGF_Ca-bd_CS"/>
</dbReference>
<dbReference type="InterPro" id="IPR009030">
    <property type="entry name" value="Growth_fac_rcpt_cys_sf"/>
</dbReference>
<dbReference type="InterPro" id="IPR036055">
    <property type="entry name" value="LDL_receptor-like_sf"/>
</dbReference>
<dbReference type="InterPro" id="IPR051221">
    <property type="entry name" value="LDLR-related"/>
</dbReference>
<dbReference type="InterPro" id="IPR023415">
    <property type="entry name" value="LDLR_class-A_CS"/>
</dbReference>
<dbReference type="InterPro" id="IPR000033">
    <property type="entry name" value="LDLR_classB_rpt"/>
</dbReference>
<dbReference type="InterPro" id="IPR002172">
    <property type="entry name" value="LDrepeatLR_classA_rpt"/>
</dbReference>
<dbReference type="InterPro" id="IPR049883">
    <property type="entry name" value="NOTCH1_EGF-like"/>
</dbReference>
<dbReference type="PANTHER" id="PTHR22722:SF15">
    <property type="entry name" value="LOW-DENSITY LIPOPROTEIN RECEPTOR-RELATED"/>
    <property type="match status" value="1"/>
</dbReference>
<dbReference type="PANTHER" id="PTHR22722">
    <property type="entry name" value="LOW-DENSITY LIPOPROTEIN RECEPTOR-RELATED PROTEIN 2-RELATED"/>
    <property type="match status" value="1"/>
</dbReference>
<dbReference type="Pfam" id="PF07645">
    <property type="entry name" value="EGF_CA"/>
    <property type="match status" value="1"/>
</dbReference>
<dbReference type="Pfam" id="PF00057">
    <property type="entry name" value="Ldl_recept_a"/>
    <property type="match status" value="7"/>
</dbReference>
<dbReference type="Pfam" id="PF00058">
    <property type="entry name" value="Ldl_recept_b"/>
    <property type="match status" value="5"/>
</dbReference>
<dbReference type="PRINTS" id="PR00261">
    <property type="entry name" value="LDLRECEPTOR"/>
</dbReference>
<dbReference type="SMART" id="SM00181">
    <property type="entry name" value="EGF"/>
    <property type="match status" value="5"/>
</dbReference>
<dbReference type="SMART" id="SM00179">
    <property type="entry name" value="EGF_CA"/>
    <property type="match status" value="2"/>
</dbReference>
<dbReference type="SMART" id="SM00192">
    <property type="entry name" value="LDLa"/>
    <property type="match status" value="7"/>
</dbReference>
<dbReference type="SMART" id="SM00135">
    <property type="entry name" value="LY"/>
    <property type="match status" value="5"/>
</dbReference>
<dbReference type="SUPFAM" id="SSF57184">
    <property type="entry name" value="Growth factor receptor domain"/>
    <property type="match status" value="1"/>
</dbReference>
<dbReference type="SUPFAM" id="SSF57424">
    <property type="entry name" value="LDL receptor-like module"/>
    <property type="match status" value="6"/>
</dbReference>
<dbReference type="SUPFAM" id="SSF63825">
    <property type="entry name" value="YWTD domain"/>
    <property type="match status" value="1"/>
</dbReference>
<dbReference type="PROSITE" id="PS00010">
    <property type="entry name" value="ASX_HYDROXYL"/>
    <property type="match status" value="1"/>
</dbReference>
<dbReference type="PROSITE" id="PS01186">
    <property type="entry name" value="EGF_2"/>
    <property type="match status" value="2"/>
</dbReference>
<dbReference type="PROSITE" id="PS50026">
    <property type="entry name" value="EGF_3"/>
    <property type="match status" value="2"/>
</dbReference>
<dbReference type="PROSITE" id="PS01187">
    <property type="entry name" value="EGF_CA"/>
    <property type="match status" value="1"/>
</dbReference>
<dbReference type="PROSITE" id="PS01209">
    <property type="entry name" value="LDLRA_1"/>
    <property type="match status" value="7"/>
</dbReference>
<dbReference type="PROSITE" id="PS50068">
    <property type="entry name" value="LDLRA_2"/>
    <property type="match status" value="7"/>
</dbReference>
<dbReference type="PROSITE" id="PS51120">
    <property type="entry name" value="LDLRB"/>
    <property type="match status" value="5"/>
</dbReference>
<reference key="1">
    <citation type="journal article" date="1986" name="Science">
        <title>Deletion in cysteine-rich region of LDL receptor impedes transport to cell surface in WHHL rabbit.</title>
        <authorList>
            <person name="Yamamoto T."/>
            <person name="Bishop R.W."/>
            <person name="Brown M.S."/>
            <person name="Goldstein J.L."/>
            <person name="Russell D.W."/>
        </authorList>
    </citation>
    <scope>NUCLEOTIDE SEQUENCE [MRNA]</scope>
    <scope>SUBCELLULAR LOCATION</scope>
</reference>
<proteinExistence type="evidence at transcript level"/>
<keyword id="KW-1003">Cell membrane</keyword>
<keyword id="KW-0153">Cholesterol metabolism</keyword>
<keyword id="KW-0168">Coated pit</keyword>
<keyword id="KW-1015">Disulfide bond</keyword>
<keyword id="KW-0245">EGF-like domain</keyword>
<keyword id="KW-0254">Endocytosis</keyword>
<keyword id="KW-0967">Endosome</keyword>
<keyword id="KW-0325">Glycoprotein</keyword>
<keyword id="KW-0333">Golgi apparatus</keyword>
<keyword id="KW-0427">LDL</keyword>
<keyword id="KW-0443">Lipid metabolism</keyword>
<keyword id="KW-0445">Lipid transport</keyword>
<keyword id="KW-0458">Lysosome</keyword>
<keyword id="KW-0472">Membrane</keyword>
<keyword id="KW-0597">Phosphoprotein</keyword>
<keyword id="KW-0675">Receptor</keyword>
<keyword id="KW-1185">Reference proteome</keyword>
<keyword id="KW-0677">Repeat</keyword>
<keyword id="KW-0753">Steroid metabolism</keyword>
<keyword id="KW-1207">Sterol metabolism</keyword>
<keyword id="KW-0812">Transmembrane</keyword>
<keyword id="KW-1133">Transmembrane helix</keyword>
<keyword id="KW-0813">Transport</keyword>
<keyword id="KW-0832">Ubl conjugation</keyword>
<sequence length="837" mass="91407">LLAAAAGAAAGDKCGRNEFQCRNGKCISYKWVCDGSSECQDGSDEWEQTCMSLTCKSDDFSCGGRLNRCIPGHWKCDGQQDCEDGSDELGCAPKTCSQDEFRCAEGACISRLFACDGEPDCPDGSDEASCAPSTCGPAHFRCNSSSCVPALWACDGEPDCDDGSDEWPARCGARPSPQPGRGPCSRHEFHCGSGECVHASWRCDGDADCRDGSDERDCAAATCRPDEFQCSDGTCIHGSRQCDQQQDCGDMSDEVGCVNVTLCEGPDKFKCHSGECISLDKVCNSARDCQDWSDEPIKECATNECMRGNGGCSHTCFDLRIGHECHCPKGYRLVDQRRCEDINECEDPDICSQLCVNLAGSYKCECRAGFQLDPHSQACKAVDSIAYLFFTNRHEVRKMTLDRSEYTSLIANLKNVVALDAEVASNRIYWSDLSQRKIYSAQIDGAHGFPAYDTVISSDLQAPDGLAVDWIHGHIYWTDSVLGTVSVADTRGFRRKTLFRQEGSKPRAIVVDPAHGFMYWTDWGVPAKIEKGGLNGVDVYSLVTEDIQWPNGITLDLSSGRLYWVDSKLHSISSIDVNGGNRKTVLEDEQRLAHPFSLAIFEDKVFWTDVINEAIFSANRLTGSDVHLVAENLLSPEDIVLFHNLTQPRGVNWCEKTALPNGGCQYLCLPAPQINSHSPKFTCACPDGTLLAADMRSCRTEADVILSTQRASTAARPQLTGSPAGTTQEPLTEPTLSTLETATTSQQALHNADGRGSEGTPRSVGALSVVLPIALLGLLCLGALVLWKNWRLRSVHSINFDNPVYQKTTEDEVHICRSQDGYTYPSRQMVSLEDDVA</sequence>
<name>LDLR_RABIT</name>
<organism>
    <name type="scientific">Oryctolagus cuniculus</name>
    <name type="common">Rabbit</name>
    <dbReference type="NCBI Taxonomy" id="9986"/>
    <lineage>
        <taxon>Eukaryota</taxon>
        <taxon>Metazoa</taxon>
        <taxon>Chordata</taxon>
        <taxon>Craniata</taxon>
        <taxon>Vertebrata</taxon>
        <taxon>Euteleostomi</taxon>
        <taxon>Mammalia</taxon>
        <taxon>Eutheria</taxon>
        <taxon>Euarchontoglires</taxon>
        <taxon>Glires</taxon>
        <taxon>Lagomorpha</taxon>
        <taxon>Leporidae</taxon>
        <taxon>Oryctolagus</taxon>
    </lineage>
</organism>
<gene>
    <name type="primary">LDLR</name>
</gene>